<proteinExistence type="evidence at protein level"/>
<keyword id="KW-0903">Direct protein sequencing</keyword>
<keyword id="KW-1015">Disulfide bond</keyword>
<keyword id="KW-0325">Glycoprotein</keyword>
<keyword id="KW-0378">Hydrolase</keyword>
<keyword id="KW-0645">Protease</keyword>
<keyword id="KW-1185">Reference proteome</keyword>
<keyword id="KW-0720">Serine protease</keyword>
<keyword id="KW-0732">Signal</keyword>
<keyword id="KW-0865">Zymogen</keyword>
<feature type="signal peptide">
    <location>
        <begin position="1"/>
        <end position="17"/>
    </location>
</feature>
<feature type="propeptide" id="PRO_0000027989" description="Activation peptide" evidence="2 3">
    <location>
        <begin position="18"/>
        <end position="24"/>
    </location>
</feature>
<feature type="chain" id="PRO_0000027990" description="Kallikrein 1-related peptidase b22">
    <location>
        <begin position="25"/>
        <end position="259"/>
    </location>
</feature>
<feature type="domain" description="Peptidase S1" evidence="1">
    <location>
        <begin position="25"/>
        <end position="256"/>
    </location>
</feature>
<feature type="active site" description="Charge relay system">
    <location>
        <position position="65"/>
    </location>
</feature>
<feature type="active site" description="Charge relay system">
    <location>
        <position position="118"/>
    </location>
</feature>
<feature type="active site" description="Charge relay system">
    <location>
        <position position="211"/>
    </location>
</feature>
<feature type="glycosylation site" description="N-linked (GlcNAc...) asparagine" evidence="4">
    <location>
        <position position="102"/>
    </location>
</feature>
<feature type="disulfide bond" evidence="1">
    <location>
        <begin position="31"/>
        <end position="171"/>
    </location>
</feature>
<feature type="disulfide bond" evidence="1">
    <location>
        <begin position="50"/>
        <end position="66"/>
    </location>
</feature>
<feature type="disulfide bond" evidence="1">
    <location>
        <begin position="150"/>
        <end position="217"/>
    </location>
</feature>
<feature type="disulfide bond" evidence="1">
    <location>
        <begin position="182"/>
        <end position="196"/>
    </location>
</feature>
<feature type="disulfide bond" evidence="1">
    <location>
        <begin position="207"/>
        <end position="232"/>
    </location>
</feature>
<reference key="1">
    <citation type="journal article" date="1987" name="Biochemistry">
        <title>Mouse glandular kallikrein genes: identification and characterization of the genes encoding the epidermal growth factor binding proteins.</title>
        <authorList>
            <person name="Drinkwater C.C."/>
            <person name="Evans B.A."/>
            <person name="Richards R.I."/>
        </authorList>
    </citation>
    <scope>NUCLEOTIDE SEQUENCE [GENOMIC DNA]</scope>
    <source>
        <strain>BALB/cJ</strain>
        <tissue>Salivary gland</tissue>
    </source>
</reference>
<reference key="2">
    <citation type="journal article" date="1991" name="Biochemistry">
        <title>Beta-NGF-endopeptidase: structure and activity of a kallikrein encoded by the gene mGK-22.</title>
        <authorList>
            <person name="Fahnestock M."/>
            <person name="Woo J.E."/>
            <person name="Lopez G.A."/>
            <person name="Snow J."/>
            <person name="Walz D.A."/>
            <person name="Arici M.J."/>
            <person name="Mobley W.C."/>
        </authorList>
    </citation>
    <scope>PROTEIN SEQUENCE OF 25-54</scope>
</reference>
<reference key="3">
    <citation type="journal article" date="1992" name="J. Biochem.">
        <title>mGK-6-derived true tissue kallikrein is synthesized, processed, and targeted through a regulated secretory pathway in mouse pituitary AtT-20 cells.</title>
        <authorList>
            <person name="Peters J."/>
            <person name="Takahashi S."/>
            <person name="Tada M."/>
            <person name="Miyake Y."/>
        </authorList>
    </citation>
    <scope>PROTEIN SEQUENCE OF 25-41</scope>
    <source>
        <tissue>Submandibular gland</tissue>
    </source>
</reference>
<reference key="4">
    <citation type="journal article" date="1987" name="J. Biol. Chem.">
        <title>Mouse glandular kallikrein genes. Structure and partial sequence analysis of the kallikrein gene locus.</title>
        <authorList>
            <person name="Evans B.A."/>
            <person name="Drinkwater C.C."/>
            <person name="Richards R.I."/>
        </authorList>
    </citation>
    <scope>NUCLEOTIDE SEQUENCE [GENOMIC DNA] OF 17-54 AND 70-120</scope>
</reference>
<dbReference type="EC" id="3.4.21.35"/>
<dbReference type="EMBL" id="M17979">
    <property type="protein sequence ID" value="AAA37682.1"/>
    <property type="status" value="ALT_SEQ"/>
    <property type="molecule type" value="Genomic_DNA"/>
</dbReference>
<dbReference type="EMBL" id="M17977">
    <property type="protein sequence ID" value="AAA37682.1"/>
    <property type="status" value="JOINED"/>
    <property type="molecule type" value="Genomic_DNA"/>
</dbReference>
<dbReference type="EMBL" id="M17978">
    <property type="protein sequence ID" value="AAA37682.1"/>
    <property type="status" value="JOINED"/>
    <property type="molecule type" value="Genomic_DNA"/>
</dbReference>
<dbReference type="EMBL" id="M18598">
    <property type="protein sequence ID" value="AAA39361.1"/>
    <property type="molecule type" value="Genomic_DNA"/>
</dbReference>
<dbReference type="EMBL" id="M18618">
    <property type="protein sequence ID" value="AAA39362.1"/>
    <property type="molecule type" value="Genomic_DNA"/>
</dbReference>
<dbReference type="CCDS" id="CCDS21196.1"/>
<dbReference type="PIR" id="A29746">
    <property type="entry name" value="A29746"/>
</dbReference>
<dbReference type="RefSeq" id="NP_034244.1">
    <property type="nucleotide sequence ID" value="NM_010114.2"/>
</dbReference>
<dbReference type="SMR" id="P15948"/>
<dbReference type="FunCoup" id="P15948">
    <property type="interactions" value="76"/>
</dbReference>
<dbReference type="STRING" id="10090.ENSMUSP00000076733"/>
<dbReference type="MEROPS" id="S01.039"/>
<dbReference type="GlyCosmos" id="P15948">
    <property type="glycosylation" value="1 site, No reported glycans"/>
</dbReference>
<dbReference type="GlyGen" id="P15948">
    <property type="glycosylation" value="1 site"/>
</dbReference>
<dbReference type="PaxDb" id="10090-ENSMUSP00000076733"/>
<dbReference type="ProteomicsDB" id="269136"/>
<dbReference type="DNASU" id="13646"/>
<dbReference type="Ensembl" id="ENSMUST00000077528.7">
    <property type="protein sequence ID" value="ENSMUSP00000076733.7"/>
    <property type="gene ID" value="ENSMUSG00000060177.7"/>
</dbReference>
<dbReference type="GeneID" id="13646"/>
<dbReference type="KEGG" id="mmu:13646"/>
<dbReference type="UCSC" id="uc009goi.1">
    <property type="organism name" value="mouse"/>
</dbReference>
<dbReference type="AGR" id="MGI:95291"/>
<dbReference type="CTD" id="13646"/>
<dbReference type="MGI" id="MGI:95291">
    <property type="gene designation" value="Klk1b22"/>
</dbReference>
<dbReference type="VEuPathDB" id="HostDB:ENSMUSG00000060177"/>
<dbReference type="eggNOG" id="KOG3627">
    <property type="taxonomic scope" value="Eukaryota"/>
</dbReference>
<dbReference type="GeneTree" id="ENSGT01020000230389"/>
<dbReference type="HOGENOM" id="CLU_006842_1_1_1"/>
<dbReference type="InParanoid" id="P15948"/>
<dbReference type="OMA" id="MAQVRIL"/>
<dbReference type="OrthoDB" id="10061449at2759"/>
<dbReference type="PhylomeDB" id="P15948"/>
<dbReference type="TreeFam" id="TF331065"/>
<dbReference type="Reactome" id="R-MMU-1592389">
    <property type="pathway name" value="Activation of Matrix Metalloproteinases"/>
</dbReference>
<dbReference type="BioGRID-ORCS" id="13646">
    <property type="hits" value="3 hits in 79 CRISPR screens"/>
</dbReference>
<dbReference type="ChiTaRS" id="Klk1b22">
    <property type="organism name" value="mouse"/>
</dbReference>
<dbReference type="PRO" id="PR:P15948"/>
<dbReference type="Proteomes" id="UP000000589">
    <property type="component" value="Chromosome 7"/>
</dbReference>
<dbReference type="RNAct" id="P15948">
    <property type="molecule type" value="protein"/>
</dbReference>
<dbReference type="Bgee" id="ENSMUSG00000060177">
    <property type="expression patterns" value="Expressed in right kidney and 9 other cell types or tissues"/>
</dbReference>
<dbReference type="ExpressionAtlas" id="P15948">
    <property type="expression patterns" value="baseline and differential"/>
</dbReference>
<dbReference type="GO" id="GO:0008233">
    <property type="term" value="F:peptidase activity"/>
    <property type="evidence" value="ECO:0000314"/>
    <property type="project" value="MGI"/>
</dbReference>
<dbReference type="GO" id="GO:0004252">
    <property type="term" value="F:serine-type endopeptidase activity"/>
    <property type="evidence" value="ECO:0007669"/>
    <property type="project" value="UniProtKB-EC"/>
</dbReference>
<dbReference type="GO" id="GO:0031638">
    <property type="term" value="P:zymogen activation"/>
    <property type="evidence" value="ECO:0000314"/>
    <property type="project" value="MGI"/>
</dbReference>
<dbReference type="CDD" id="cd00190">
    <property type="entry name" value="Tryp_SPc"/>
    <property type="match status" value="1"/>
</dbReference>
<dbReference type="FunFam" id="2.40.10.10:FF:000032">
    <property type="entry name" value="Kallikrein 1-related peptidase C9"/>
    <property type="match status" value="1"/>
</dbReference>
<dbReference type="FunFam" id="2.40.10.10:FF:000042">
    <property type="entry name" value="Kallikrein 1-related peptidase C9"/>
    <property type="match status" value="1"/>
</dbReference>
<dbReference type="Gene3D" id="2.40.10.10">
    <property type="entry name" value="Trypsin-like serine proteases"/>
    <property type="match status" value="2"/>
</dbReference>
<dbReference type="InterPro" id="IPR009003">
    <property type="entry name" value="Peptidase_S1_PA"/>
</dbReference>
<dbReference type="InterPro" id="IPR043504">
    <property type="entry name" value="Peptidase_S1_PA_chymotrypsin"/>
</dbReference>
<dbReference type="InterPro" id="IPR001314">
    <property type="entry name" value="Peptidase_S1A"/>
</dbReference>
<dbReference type="InterPro" id="IPR001254">
    <property type="entry name" value="Trypsin_dom"/>
</dbReference>
<dbReference type="InterPro" id="IPR018114">
    <property type="entry name" value="TRYPSIN_HIS"/>
</dbReference>
<dbReference type="InterPro" id="IPR033116">
    <property type="entry name" value="TRYPSIN_SER"/>
</dbReference>
<dbReference type="PANTHER" id="PTHR24271:SF47">
    <property type="entry name" value="KALLIKREIN-1"/>
    <property type="match status" value="1"/>
</dbReference>
<dbReference type="PANTHER" id="PTHR24271">
    <property type="entry name" value="KALLIKREIN-RELATED"/>
    <property type="match status" value="1"/>
</dbReference>
<dbReference type="Pfam" id="PF00089">
    <property type="entry name" value="Trypsin"/>
    <property type="match status" value="1"/>
</dbReference>
<dbReference type="PRINTS" id="PR00722">
    <property type="entry name" value="CHYMOTRYPSIN"/>
</dbReference>
<dbReference type="SMART" id="SM00020">
    <property type="entry name" value="Tryp_SPc"/>
    <property type="match status" value="1"/>
</dbReference>
<dbReference type="SUPFAM" id="SSF50494">
    <property type="entry name" value="Trypsin-like serine proteases"/>
    <property type="match status" value="1"/>
</dbReference>
<dbReference type="PROSITE" id="PS50240">
    <property type="entry name" value="TRYPSIN_DOM"/>
    <property type="match status" value="1"/>
</dbReference>
<dbReference type="PROSITE" id="PS00134">
    <property type="entry name" value="TRYPSIN_HIS"/>
    <property type="match status" value="1"/>
</dbReference>
<dbReference type="PROSITE" id="PS00135">
    <property type="entry name" value="TRYPSIN_SER"/>
    <property type="match status" value="1"/>
</dbReference>
<protein>
    <recommendedName>
        <fullName>Kallikrein 1-related peptidase b22</fullName>
        <ecNumber>3.4.21.35</ecNumber>
    </recommendedName>
    <alternativeName>
        <fullName>Beta-NGF-endopeptidase</fullName>
    </alternativeName>
    <alternativeName>
        <fullName>Epidermal growth factor-binding protein type A</fullName>
        <shortName>EGF-BP A</shortName>
    </alternativeName>
    <alternativeName>
        <fullName>Glandular kallikrein K22</fullName>
        <shortName>mGK-22</shortName>
    </alternativeName>
    <alternativeName>
        <fullName>Nerve growth factor beta chain endopeptidase</fullName>
    </alternativeName>
    <alternativeName>
        <fullName>Tissue kallikrein 22</fullName>
    </alternativeName>
</protein>
<accession>P15948</accession>
<organism>
    <name type="scientific">Mus musculus</name>
    <name type="common">Mouse</name>
    <dbReference type="NCBI Taxonomy" id="10090"/>
    <lineage>
        <taxon>Eukaryota</taxon>
        <taxon>Metazoa</taxon>
        <taxon>Chordata</taxon>
        <taxon>Craniata</taxon>
        <taxon>Vertebrata</taxon>
        <taxon>Euteleostomi</taxon>
        <taxon>Mammalia</taxon>
        <taxon>Eutheria</taxon>
        <taxon>Euarchontoglires</taxon>
        <taxon>Glires</taxon>
        <taxon>Rodentia</taxon>
        <taxon>Myomorpha</taxon>
        <taxon>Muroidea</taxon>
        <taxon>Muridae</taxon>
        <taxon>Murinae</taxon>
        <taxon>Mus</taxon>
        <taxon>Mus</taxon>
    </lineage>
</organism>
<comment type="function">
    <text>Glandular kallikreins cleave Met-Lys and Arg-Ser bonds in kininogen to release Lys-bradykinin.</text>
</comment>
<comment type="catalytic activity">
    <reaction>
        <text>Preferential cleavage of Arg-|-Xaa bonds in small molecule substrates. Highly selective action to release kallidin (lysyl-bradykinin) from kininogen involves hydrolysis of Met-|-Xaa or Leu-|-Xaa.</text>
        <dbReference type="EC" id="3.4.21.35"/>
    </reaction>
</comment>
<comment type="similarity">
    <text evidence="1">Belongs to the peptidase S1 family. Kallikrein subfamily.</text>
</comment>
<sequence>MRFLILFLTLSLGGIDAAPPVQSRILGGFKCEKNSQPWQVAVYYLDEYLCGGVLLDRNWVLTAAHCYEDKYNIWLGKNKLFQDEPSAQHRLVSKSFPHPDFNMSLLQSVPTGADLSNDLMLLRLSKPADITDVVKPIDLPTTEPKLGSTCLASGWGSINQLIYQNPNDLQCVSIKLHPNEVCVKAHILKVTDVMLCAGEMNGGKDTCKGDSGGPLICDGVLQGITSWGSTPCGEPNAPAIYTKLIKFTSWIKDTMAKNP</sequence>
<gene>
    <name type="primary">Klk1b22</name>
    <name type="synonym">Klk-22</name>
    <name type="synonym">Klk22</name>
</gene>
<evidence type="ECO:0000255" key="1">
    <source>
        <dbReference type="PROSITE-ProRule" id="PRU00274"/>
    </source>
</evidence>
<evidence type="ECO:0000269" key="2">
    <source>
    </source>
</evidence>
<evidence type="ECO:0000269" key="3">
    <source>
    </source>
</evidence>
<evidence type="ECO:0000305" key="4"/>
<name>K1B22_MOUSE</name>